<organism>
    <name type="scientific">Salmonella enteritidis PT4 (strain P125109)</name>
    <dbReference type="NCBI Taxonomy" id="550537"/>
    <lineage>
        <taxon>Bacteria</taxon>
        <taxon>Pseudomonadati</taxon>
        <taxon>Pseudomonadota</taxon>
        <taxon>Gammaproteobacteria</taxon>
        <taxon>Enterobacterales</taxon>
        <taxon>Enterobacteriaceae</taxon>
        <taxon>Salmonella</taxon>
    </lineage>
</organism>
<dbReference type="EC" id="2.5.1.-" evidence="1"/>
<dbReference type="EMBL" id="AM933172">
    <property type="protein sequence ID" value="CAR32680.1"/>
    <property type="molecule type" value="Genomic_DNA"/>
</dbReference>
<dbReference type="RefSeq" id="WP_000569035.1">
    <property type="nucleotide sequence ID" value="NC_011294.1"/>
</dbReference>
<dbReference type="SMR" id="B5R145"/>
<dbReference type="KEGG" id="set:SEN1097"/>
<dbReference type="HOGENOM" id="CLU_052665_0_0_6"/>
<dbReference type="Proteomes" id="UP000000613">
    <property type="component" value="Chromosome"/>
</dbReference>
<dbReference type="GO" id="GO:0008168">
    <property type="term" value="F:methyltransferase activity"/>
    <property type="evidence" value="ECO:0007669"/>
    <property type="project" value="TreeGrafter"/>
</dbReference>
<dbReference type="GO" id="GO:0016765">
    <property type="term" value="F:transferase activity, transferring alkyl or aryl (other than methyl) groups"/>
    <property type="evidence" value="ECO:0007669"/>
    <property type="project" value="UniProtKB-UniRule"/>
</dbReference>
<dbReference type="GO" id="GO:0002098">
    <property type="term" value="P:tRNA wobble uridine modification"/>
    <property type="evidence" value="ECO:0007669"/>
    <property type="project" value="InterPro"/>
</dbReference>
<dbReference type="CDD" id="cd02440">
    <property type="entry name" value="AdoMet_MTases"/>
    <property type="match status" value="1"/>
</dbReference>
<dbReference type="FunFam" id="3.40.50.150:FF:000080">
    <property type="entry name" value="tRNA U34 carboxymethyltransferase"/>
    <property type="match status" value="1"/>
</dbReference>
<dbReference type="Gene3D" id="3.40.50.150">
    <property type="entry name" value="Vaccinia Virus protein VP39"/>
    <property type="match status" value="1"/>
</dbReference>
<dbReference type="HAMAP" id="MF_01590">
    <property type="entry name" value="tRNA_carboxymethyltr_CmoB"/>
    <property type="match status" value="1"/>
</dbReference>
<dbReference type="InterPro" id="IPR010017">
    <property type="entry name" value="CmoB"/>
</dbReference>
<dbReference type="InterPro" id="IPR027555">
    <property type="entry name" value="Mo5U34_MeTrfas-like"/>
</dbReference>
<dbReference type="InterPro" id="IPR029063">
    <property type="entry name" value="SAM-dependent_MTases_sf"/>
</dbReference>
<dbReference type="NCBIfam" id="NF011650">
    <property type="entry name" value="PRK15068.1"/>
    <property type="match status" value="1"/>
</dbReference>
<dbReference type="NCBIfam" id="TIGR00452">
    <property type="entry name" value="tRNA 5-methoxyuridine(34)/uridine 5-oxyacetic acid(34) synthase CmoB"/>
    <property type="match status" value="1"/>
</dbReference>
<dbReference type="PANTHER" id="PTHR43464">
    <property type="entry name" value="METHYLTRANSFERASE"/>
    <property type="match status" value="1"/>
</dbReference>
<dbReference type="PANTHER" id="PTHR43464:SF95">
    <property type="entry name" value="TRNA U34 CARBOXYMETHYLTRANSFERASE"/>
    <property type="match status" value="1"/>
</dbReference>
<dbReference type="Pfam" id="PF08003">
    <property type="entry name" value="Methyltransf_9"/>
    <property type="match status" value="1"/>
</dbReference>
<dbReference type="SUPFAM" id="SSF53335">
    <property type="entry name" value="S-adenosyl-L-methionine-dependent methyltransferases"/>
    <property type="match status" value="1"/>
</dbReference>
<keyword id="KW-0808">Transferase</keyword>
<keyword id="KW-0819">tRNA processing</keyword>
<sequence length="323" mass="37081">MIEFGNFYQLIAKNHLSHWLETLPAQIAAWQREQQHGLFKQWSNAVEFLPEMTPWRLDLLHSVTAESETPLSEGQLKRIDTLLRNLMPWRKGPFSLYGVDIDTEWRSDWKWDRVLPHLSDLTGRTILDVGCGSGYHLWRMIGAGAHLAVGIDPTQLFLCQFEAVRKLLGNDQRAHLLPLGIEQLPALKAFDTVFSMGVLYHRRSPLEHLWQLKDQLVNEGELVLETLVVDGDENTVLVPGDRYAQMRNVYFIPSAPALKKWLEKCGFIDVRIADVCVTTTEEQRRTEWMVTESLADFLDPNDRSKTVEGYPAPQRAVLIARKP</sequence>
<evidence type="ECO:0000255" key="1">
    <source>
        <dbReference type="HAMAP-Rule" id="MF_01590"/>
    </source>
</evidence>
<name>CMOB_SALEP</name>
<protein>
    <recommendedName>
        <fullName evidence="1">tRNA U34 carboxymethyltransferase</fullName>
        <ecNumber evidence="1">2.5.1.-</ecNumber>
    </recommendedName>
</protein>
<comment type="function">
    <text evidence="1">Catalyzes carboxymethyl transfer from carboxy-S-adenosyl-L-methionine (Cx-SAM) to 5-hydroxyuridine (ho5U) to form 5-carboxymethoxyuridine (cmo5U) at position 34 in tRNAs.</text>
</comment>
<comment type="catalytic activity">
    <reaction evidence="1">
        <text>carboxy-S-adenosyl-L-methionine + 5-hydroxyuridine(34) in tRNA = 5-carboxymethoxyuridine(34) in tRNA + S-adenosyl-L-homocysteine + H(+)</text>
        <dbReference type="Rhea" id="RHEA:52848"/>
        <dbReference type="Rhea" id="RHEA-COMP:13381"/>
        <dbReference type="Rhea" id="RHEA-COMP:13383"/>
        <dbReference type="ChEBI" id="CHEBI:15378"/>
        <dbReference type="ChEBI" id="CHEBI:57856"/>
        <dbReference type="ChEBI" id="CHEBI:134278"/>
        <dbReference type="ChEBI" id="CHEBI:136877"/>
        <dbReference type="ChEBI" id="CHEBI:136879"/>
    </reaction>
</comment>
<comment type="subunit">
    <text evidence="1">Homotetramer.</text>
</comment>
<comment type="similarity">
    <text evidence="1">Belongs to the class I-like SAM-binding methyltransferase superfamily. CmoB family.</text>
</comment>
<reference key="1">
    <citation type="journal article" date="2008" name="Genome Res.">
        <title>Comparative genome analysis of Salmonella enteritidis PT4 and Salmonella gallinarum 287/91 provides insights into evolutionary and host adaptation pathways.</title>
        <authorList>
            <person name="Thomson N.R."/>
            <person name="Clayton D.J."/>
            <person name="Windhorst D."/>
            <person name="Vernikos G."/>
            <person name="Davidson S."/>
            <person name="Churcher C."/>
            <person name="Quail M.A."/>
            <person name="Stevens M."/>
            <person name="Jones M.A."/>
            <person name="Watson M."/>
            <person name="Barron A."/>
            <person name="Layton A."/>
            <person name="Pickard D."/>
            <person name="Kingsley R.A."/>
            <person name="Bignell A."/>
            <person name="Clark L."/>
            <person name="Harris B."/>
            <person name="Ormond D."/>
            <person name="Abdellah Z."/>
            <person name="Brooks K."/>
            <person name="Cherevach I."/>
            <person name="Chillingworth T."/>
            <person name="Woodward J."/>
            <person name="Norberczak H."/>
            <person name="Lord A."/>
            <person name="Arrowsmith C."/>
            <person name="Jagels K."/>
            <person name="Moule S."/>
            <person name="Mungall K."/>
            <person name="Saunders M."/>
            <person name="Whitehead S."/>
            <person name="Chabalgoity J.A."/>
            <person name="Maskell D."/>
            <person name="Humphreys T."/>
            <person name="Roberts M."/>
            <person name="Barrow P.A."/>
            <person name="Dougan G."/>
            <person name="Parkhill J."/>
        </authorList>
    </citation>
    <scope>NUCLEOTIDE SEQUENCE [LARGE SCALE GENOMIC DNA]</scope>
    <source>
        <strain>P125109</strain>
    </source>
</reference>
<proteinExistence type="inferred from homology"/>
<feature type="chain" id="PRO_1000201306" description="tRNA U34 carboxymethyltransferase">
    <location>
        <begin position="1"/>
        <end position="323"/>
    </location>
</feature>
<feature type="binding site" evidence="1">
    <location>
        <position position="91"/>
    </location>
    <ligand>
        <name>carboxy-S-adenosyl-L-methionine</name>
        <dbReference type="ChEBI" id="CHEBI:134278"/>
    </ligand>
</feature>
<feature type="binding site" evidence="1">
    <location>
        <position position="105"/>
    </location>
    <ligand>
        <name>carboxy-S-adenosyl-L-methionine</name>
        <dbReference type="ChEBI" id="CHEBI:134278"/>
    </ligand>
</feature>
<feature type="binding site" evidence="1">
    <location>
        <position position="110"/>
    </location>
    <ligand>
        <name>carboxy-S-adenosyl-L-methionine</name>
        <dbReference type="ChEBI" id="CHEBI:134278"/>
    </ligand>
</feature>
<feature type="binding site" evidence="1">
    <location>
        <position position="130"/>
    </location>
    <ligand>
        <name>carboxy-S-adenosyl-L-methionine</name>
        <dbReference type="ChEBI" id="CHEBI:134278"/>
    </ligand>
</feature>
<feature type="binding site" evidence="1">
    <location>
        <begin position="152"/>
        <end position="154"/>
    </location>
    <ligand>
        <name>carboxy-S-adenosyl-L-methionine</name>
        <dbReference type="ChEBI" id="CHEBI:134278"/>
    </ligand>
</feature>
<feature type="binding site" evidence="1">
    <location>
        <begin position="181"/>
        <end position="182"/>
    </location>
    <ligand>
        <name>carboxy-S-adenosyl-L-methionine</name>
        <dbReference type="ChEBI" id="CHEBI:134278"/>
    </ligand>
</feature>
<feature type="binding site" evidence="1">
    <location>
        <position position="196"/>
    </location>
    <ligand>
        <name>carboxy-S-adenosyl-L-methionine</name>
        <dbReference type="ChEBI" id="CHEBI:134278"/>
    </ligand>
</feature>
<feature type="binding site" evidence="1">
    <location>
        <position position="200"/>
    </location>
    <ligand>
        <name>carboxy-S-adenosyl-L-methionine</name>
        <dbReference type="ChEBI" id="CHEBI:134278"/>
    </ligand>
</feature>
<feature type="binding site" evidence="1">
    <location>
        <position position="315"/>
    </location>
    <ligand>
        <name>carboxy-S-adenosyl-L-methionine</name>
        <dbReference type="ChEBI" id="CHEBI:134278"/>
    </ligand>
</feature>
<accession>B5R145</accession>
<gene>
    <name evidence="1" type="primary">cmoB</name>
    <name type="ordered locus">SEN1097</name>
</gene>